<evidence type="ECO:0000255" key="1">
    <source>
        <dbReference type="HAMAP-Rule" id="MF_01551"/>
    </source>
</evidence>
<dbReference type="EC" id="2.1.1.186" evidence="1"/>
<dbReference type="EMBL" id="CP001120">
    <property type="protein sequence ID" value="ACF66099.1"/>
    <property type="molecule type" value="Genomic_DNA"/>
</dbReference>
<dbReference type="RefSeq" id="WP_001045499.1">
    <property type="nucleotide sequence ID" value="NC_011083.1"/>
</dbReference>
<dbReference type="SMR" id="B4TGN7"/>
<dbReference type="KEGG" id="seh:SeHA_C3190"/>
<dbReference type="HOGENOM" id="CLU_043780_0_0_6"/>
<dbReference type="Proteomes" id="UP000001866">
    <property type="component" value="Chromosome"/>
</dbReference>
<dbReference type="GO" id="GO:0005737">
    <property type="term" value="C:cytoplasm"/>
    <property type="evidence" value="ECO:0007669"/>
    <property type="project" value="UniProtKB-SubCell"/>
</dbReference>
<dbReference type="GO" id="GO:0008757">
    <property type="term" value="F:S-adenosylmethionine-dependent methyltransferase activity"/>
    <property type="evidence" value="ECO:0007669"/>
    <property type="project" value="UniProtKB-UniRule"/>
</dbReference>
<dbReference type="GO" id="GO:0032259">
    <property type="term" value="P:methylation"/>
    <property type="evidence" value="ECO:0007669"/>
    <property type="project" value="UniProtKB-KW"/>
</dbReference>
<dbReference type="GO" id="GO:0006364">
    <property type="term" value="P:rRNA processing"/>
    <property type="evidence" value="ECO:0007669"/>
    <property type="project" value="UniProtKB-UniRule"/>
</dbReference>
<dbReference type="FunFam" id="3.30.2300.20:FF:000001">
    <property type="entry name" value="Ribosomal RNA large subunit methyltransferase M"/>
    <property type="match status" value="1"/>
</dbReference>
<dbReference type="FunFam" id="3.30.70.2810:FF:000001">
    <property type="entry name" value="Ribosomal RNA large subunit methyltransferase M"/>
    <property type="match status" value="1"/>
</dbReference>
<dbReference type="FunFam" id="3.40.50.150:FF:000020">
    <property type="entry name" value="Ribosomal RNA large subunit methyltransferase M"/>
    <property type="match status" value="1"/>
</dbReference>
<dbReference type="Gene3D" id="3.30.2300.20">
    <property type="match status" value="1"/>
</dbReference>
<dbReference type="Gene3D" id="3.30.70.2810">
    <property type="match status" value="1"/>
</dbReference>
<dbReference type="Gene3D" id="3.40.50.150">
    <property type="entry name" value="Vaccinia Virus protein VP39"/>
    <property type="match status" value="1"/>
</dbReference>
<dbReference type="HAMAP" id="MF_01551">
    <property type="entry name" value="23SrRNA_methyltr_M"/>
    <property type="match status" value="1"/>
</dbReference>
<dbReference type="InterPro" id="IPR040739">
    <property type="entry name" value="RlmM_FDX"/>
</dbReference>
<dbReference type="InterPro" id="IPR048646">
    <property type="entry name" value="RlmM_THUMP-like"/>
</dbReference>
<dbReference type="InterPro" id="IPR002877">
    <property type="entry name" value="RNA_MeTrfase_FtsJ_dom"/>
</dbReference>
<dbReference type="InterPro" id="IPR011224">
    <property type="entry name" value="rRNA_MeTrfase_M"/>
</dbReference>
<dbReference type="InterPro" id="IPR029063">
    <property type="entry name" value="SAM-dependent_MTases_sf"/>
</dbReference>
<dbReference type="NCBIfam" id="NF008734">
    <property type="entry name" value="PRK11760.1"/>
    <property type="match status" value="1"/>
</dbReference>
<dbReference type="PANTHER" id="PTHR37524">
    <property type="entry name" value="RIBOSOMAL RNA LARGE SUBUNIT METHYLTRANSFERASE M"/>
    <property type="match status" value="1"/>
</dbReference>
<dbReference type="PANTHER" id="PTHR37524:SF2">
    <property type="entry name" value="RIBOSOMAL RNA METHYLTRANSFERASE FTSJ DOMAIN-CONTAINING PROTEIN"/>
    <property type="match status" value="1"/>
</dbReference>
<dbReference type="Pfam" id="PF01728">
    <property type="entry name" value="FtsJ"/>
    <property type="match status" value="1"/>
</dbReference>
<dbReference type="Pfam" id="PF18125">
    <property type="entry name" value="RlmM_FDX"/>
    <property type="match status" value="1"/>
</dbReference>
<dbReference type="Pfam" id="PF21239">
    <property type="entry name" value="RLMM_N"/>
    <property type="match status" value="1"/>
</dbReference>
<dbReference type="PIRSF" id="PIRSF028774">
    <property type="entry name" value="UCP028774"/>
    <property type="match status" value="1"/>
</dbReference>
<dbReference type="SUPFAM" id="SSF53335">
    <property type="entry name" value="S-adenosyl-L-methionine-dependent methyltransferases"/>
    <property type="match status" value="1"/>
</dbReference>
<sequence>MNKVVLLCRPGFEKECAAEITDKAGKREIFGFARVKENAGYVIYECYQPEDGEKLISELPFSSLIFARQWFVVGELLQHLPPEDRITPVVGMLQGVVEKGGELRVEVADTNESKELMKFCRKFTVPLRAALRDAGVLTNYETPKRPVVHVFFIAPGCCYTGYSFAHNNSPFYMGIPRLKFPSDAPSRSTLKLEEALHVFIPEDEWDERLANGMYAVDLGACPGGWTYQLVKRNMWVYSVDNGPMAQSLMDTGQVTWLREDGFRYRPNRNNISWMVCDMVEKPAKVTALMAQWLVNGWCRETIFNLKLPMKKRYEEVSHNLAYLQAQLDEHGVNAQIQARQLYHDREEVTVHVRRLWAAVGGRRDER</sequence>
<comment type="function">
    <text evidence="1">Catalyzes the 2'-O-methylation at nucleotide C2498 in 23S rRNA.</text>
</comment>
<comment type="catalytic activity">
    <reaction evidence="1">
        <text>cytidine(2498) in 23S rRNA + S-adenosyl-L-methionine = 2'-O-methylcytidine(2498) in 23S rRNA + S-adenosyl-L-homocysteine + H(+)</text>
        <dbReference type="Rhea" id="RHEA:42788"/>
        <dbReference type="Rhea" id="RHEA-COMP:10244"/>
        <dbReference type="Rhea" id="RHEA-COMP:10245"/>
        <dbReference type="ChEBI" id="CHEBI:15378"/>
        <dbReference type="ChEBI" id="CHEBI:57856"/>
        <dbReference type="ChEBI" id="CHEBI:59789"/>
        <dbReference type="ChEBI" id="CHEBI:74495"/>
        <dbReference type="ChEBI" id="CHEBI:82748"/>
        <dbReference type="EC" id="2.1.1.186"/>
    </reaction>
</comment>
<comment type="subunit">
    <text evidence="1">Monomer.</text>
</comment>
<comment type="subcellular location">
    <subcellularLocation>
        <location evidence="1">Cytoplasm</location>
    </subcellularLocation>
</comment>
<comment type="similarity">
    <text evidence="1">Belongs to the class I-like SAM-binding methyltransferase superfamily. RNA methyltransferase RlmE family. RlmM subfamily.</text>
</comment>
<proteinExistence type="inferred from homology"/>
<name>RLMM_SALHS</name>
<gene>
    <name evidence="1" type="primary">rlmM</name>
    <name type="ordered locus">SeHA_C3190</name>
</gene>
<protein>
    <recommendedName>
        <fullName evidence="1">Ribosomal RNA large subunit methyltransferase M</fullName>
        <ecNumber evidence="1">2.1.1.186</ecNumber>
    </recommendedName>
    <alternativeName>
        <fullName evidence="1">23S rRNA (cytidine2498-2'-O)-methyltransferase</fullName>
    </alternativeName>
    <alternativeName>
        <fullName evidence="1">23S rRNA 2'-O-ribose methyltransferase RlmM</fullName>
    </alternativeName>
</protein>
<feature type="chain" id="PRO_1000201529" description="Ribosomal RNA large subunit methyltransferase M">
    <location>
        <begin position="1"/>
        <end position="366"/>
    </location>
</feature>
<feature type="active site" description="Proton acceptor" evidence="1">
    <location>
        <position position="306"/>
    </location>
</feature>
<feature type="binding site" evidence="1">
    <location>
        <position position="188"/>
    </location>
    <ligand>
        <name>S-adenosyl-L-methionine</name>
        <dbReference type="ChEBI" id="CHEBI:59789"/>
    </ligand>
</feature>
<feature type="binding site" evidence="1">
    <location>
        <begin position="221"/>
        <end position="224"/>
    </location>
    <ligand>
        <name>S-adenosyl-L-methionine</name>
        <dbReference type="ChEBI" id="CHEBI:59789"/>
    </ligand>
</feature>
<feature type="binding site" evidence="1">
    <location>
        <position position="240"/>
    </location>
    <ligand>
        <name>S-adenosyl-L-methionine</name>
        <dbReference type="ChEBI" id="CHEBI:59789"/>
    </ligand>
</feature>
<feature type="binding site" evidence="1">
    <location>
        <position position="260"/>
    </location>
    <ligand>
        <name>S-adenosyl-L-methionine</name>
        <dbReference type="ChEBI" id="CHEBI:59789"/>
    </ligand>
</feature>
<feature type="binding site" evidence="1">
    <location>
        <position position="277"/>
    </location>
    <ligand>
        <name>S-adenosyl-L-methionine</name>
        <dbReference type="ChEBI" id="CHEBI:59789"/>
    </ligand>
</feature>
<accession>B4TGN7</accession>
<reference key="1">
    <citation type="journal article" date="2011" name="J. Bacteriol.">
        <title>Comparative genomics of 28 Salmonella enterica isolates: evidence for CRISPR-mediated adaptive sublineage evolution.</title>
        <authorList>
            <person name="Fricke W.F."/>
            <person name="Mammel M.K."/>
            <person name="McDermott P.F."/>
            <person name="Tartera C."/>
            <person name="White D.G."/>
            <person name="Leclerc J.E."/>
            <person name="Ravel J."/>
            <person name="Cebula T.A."/>
        </authorList>
    </citation>
    <scope>NUCLEOTIDE SEQUENCE [LARGE SCALE GENOMIC DNA]</scope>
    <source>
        <strain>SL476</strain>
    </source>
</reference>
<organism>
    <name type="scientific">Salmonella heidelberg (strain SL476)</name>
    <dbReference type="NCBI Taxonomy" id="454169"/>
    <lineage>
        <taxon>Bacteria</taxon>
        <taxon>Pseudomonadati</taxon>
        <taxon>Pseudomonadota</taxon>
        <taxon>Gammaproteobacteria</taxon>
        <taxon>Enterobacterales</taxon>
        <taxon>Enterobacteriaceae</taxon>
        <taxon>Salmonella</taxon>
    </lineage>
</organism>
<keyword id="KW-0963">Cytoplasm</keyword>
<keyword id="KW-0489">Methyltransferase</keyword>
<keyword id="KW-0698">rRNA processing</keyword>
<keyword id="KW-0949">S-adenosyl-L-methionine</keyword>
<keyword id="KW-0808">Transferase</keyword>